<sequence length="420" mass="47339">MKWLLFFGALIGAGICGRDKFFGDQVFRINVRNGDEIRKLTELVNSDHLKLSVWKSPSTFDRPVDILVPSVSLLPVKSFLKSQGLDYSVTIEDLQALLDNEDEEMQHNEGIERSGDFNYGAYHPLEAIYHEMDSIATDFPELVSRVKIGETFEKRPMYVLKFSTGGGKKRPAIWLNAGIHAREWISQATAIWTARKIVTDYKKDPAITSILKKVDIFLLPVANPDGYVYTQSQNRLWRKTRSRNPGSRCVGADPNRNWNASFAGEGTSDNPCSEVYHGSHPNSEVEVKSVVDFIQKHGNFKCFIDLHSYSQLLMYPYGYTVKKAPDAEELDDVARNAAQALASLSGTKYRVGPTCTTVYPASGSSVDWAYDNGIKYAFTFELRDTGYYGFLLPASQIIPTAEETWLGLKTIMEHVRDHLY</sequence>
<accession>Q6P8K8</accession>
<accession>Q8BMK6</accession>
<accession>Q9CTE6</accession>
<feature type="signal peptide" evidence="5">
    <location>
        <begin position="1"/>
        <end position="16"/>
    </location>
</feature>
<feature type="propeptide" id="PRO_0000004359" description="Activation peptide" evidence="1">
    <location>
        <begin position="17"/>
        <end position="113"/>
    </location>
</feature>
<feature type="chain" id="PRO_0000004360" description="Carboxypeptidase A4">
    <location>
        <begin position="114"/>
        <end position="420"/>
    </location>
</feature>
<feature type="domain" description="Peptidase M14" evidence="6">
    <location>
        <begin position="121"/>
        <end position="415"/>
    </location>
</feature>
<feature type="active site" description="Proton donor/acceptor" evidence="6">
    <location>
        <position position="381"/>
    </location>
</feature>
<feature type="binding site" evidence="4">
    <location>
        <position position="69"/>
    </location>
    <ligand>
        <name>a protein</name>
        <dbReference type="ChEBI" id="CHEBI:16541"/>
    </ligand>
</feature>
<feature type="binding site" evidence="4">
    <location>
        <position position="71"/>
    </location>
    <ligand>
        <name>a protein</name>
        <dbReference type="ChEBI" id="CHEBI:16541"/>
    </ligand>
</feature>
<feature type="binding site" evidence="4">
    <location>
        <position position="118"/>
    </location>
    <ligand>
        <name>a protein</name>
        <dbReference type="ChEBI" id="CHEBI:16541"/>
    </ligand>
</feature>
<feature type="binding site" evidence="4">
    <location>
        <position position="122"/>
    </location>
    <ligand>
        <name>a protein</name>
        <dbReference type="ChEBI" id="CHEBI:16541"/>
    </ligand>
</feature>
<feature type="binding site" evidence="4">
    <location>
        <position position="123"/>
    </location>
    <ligand>
        <name>a protein</name>
        <dbReference type="ChEBI" id="CHEBI:16541"/>
    </ligand>
</feature>
<feature type="binding site" evidence="4">
    <location>
        <position position="126"/>
    </location>
    <ligand>
        <name>a protein</name>
        <dbReference type="ChEBI" id="CHEBI:16541"/>
    </ligand>
</feature>
<feature type="binding site" evidence="4">
    <location>
        <position position="162"/>
    </location>
    <ligand>
        <name>a protein</name>
        <dbReference type="ChEBI" id="CHEBI:16541"/>
    </ligand>
</feature>
<feature type="binding site" evidence="6">
    <location>
        <position position="180"/>
    </location>
    <ligand>
        <name>Zn(2+)</name>
        <dbReference type="ChEBI" id="CHEBI:29105"/>
        <note>catalytic</note>
    </ligand>
</feature>
<feature type="binding site" evidence="6">
    <location>
        <position position="183"/>
    </location>
    <ligand>
        <name>Zn(2+)</name>
        <dbReference type="ChEBI" id="CHEBI:29105"/>
        <note>catalytic</note>
    </ligand>
</feature>
<feature type="binding site" evidence="6">
    <location>
        <position position="307"/>
    </location>
    <ligand>
        <name>Zn(2+)</name>
        <dbReference type="ChEBI" id="CHEBI:29105"/>
        <note>catalytic</note>
    </ligand>
</feature>
<feature type="glycosylation site" description="N-linked (GlcNAc...) asparagine" evidence="5">
    <location>
        <position position="259"/>
    </location>
</feature>
<feature type="disulfide bond" evidence="3">
    <location>
        <begin position="249"/>
        <end position="272"/>
    </location>
</feature>
<feature type="sequence conflict" description="In Ref. 2; AAH61206." evidence="7" ref="2">
    <original>I</original>
    <variation>V</variation>
    <location>
        <position position="210"/>
    </location>
</feature>
<dbReference type="EC" id="3.4.17.-"/>
<dbReference type="EMBL" id="AK003823">
    <property type="protein sequence ID" value="BAB23019.1"/>
    <property type="molecule type" value="mRNA"/>
</dbReference>
<dbReference type="EMBL" id="AK030705">
    <property type="protein sequence ID" value="BAC27090.1"/>
    <property type="molecule type" value="mRNA"/>
</dbReference>
<dbReference type="EMBL" id="BC061206">
    <property type="protein sequence ID" value="AAH61206.1"/>
    <property type="molecule type" value="mRNA"/>
</dbReference>
<dbReference type="CCDS" id="CCDS19975.1"/>
<dbReference type="RefSeq" id="NP_082202.1">
    <property type="nucleotide sequence ID" value="NM_027926.3"/>
</dbReference>
<dbReference type="SMR" id="Q6P8K8"/>
<dbReference type="FunCoup" id="Q6P8K8">
    <property type="interactions" value="74"/>
</dbReference>
<dbReference type="STRING" id="10090.ENSMUSP00000048558"/>
<dbReference type="MEROPS" id="M14.017"/>
<dbReference type="GlyCosmos" id="Q6P8K8">
    <property type="glycosylation" value="1 site, No reported glycans"/>
</dbReference>
<dbReference type="GlyGen" id="Q6P8K8">
    <property type="glycosylation" value="2 sites"/>
</dbReference>
<dbReference type="iPTMnet" id="Q6P8K8"/>
<dbReference type="PhosphoSitePlus" id="Q6P8K8"/>
<dbReference type="PaxDb" id="10090-ENSMUSP00000048558"/>
<dbReference type="PeptideAtlas" id="Q6P8K8"/>
<dbReference type="ProteomicsDB" id="265283"/>
<dbReference type="Pumba" id="Q6P8K8"/>
<dbReference type="Antibodypedia" id="17950">
    <property type="antibodies" value="95 antibodies from 26 providers"/>
</dbReference>
<dbReference type="DNASU" id="71791"/>
<dbReference type="Ensembl" id="ENSMUST00000049251.6">
    <property type="protein sequence ID" value="ENSMUSP00000048558.6"/>
    <property type="gene ID" value="ENSMUSG00000039070.6"/>
</dbReference>
<dbReference type="GeneID" id="71791"/>
<dbReference type="KEGG" id="mmu:71791"/>
<dbReference type="UCSC" id="uc009bfo.1">
    <property type="organism name" value="mouse"/>
</dbReference>
<dbReference type="AGR" id="MGI:1919041"/>
<dbReference type="CTD" id="51200"/>
<dbReference type="MGI" id="MGI:1919041">
    <property type="gene designation" value="Cpa4"/>
</dbReference>
<dbReference type="VEuPathDB" id="HostDB:ENSMUSG00000039070"/>
<dbReference type="eggNOG" id="KOG2650">
    <property type="taxonomic scope" value="Eukaryota"/>
</dbReference>
<dbReference type="GeneTree" id="ENSGT00940000161774"/>
<dbReference type="HOGENOM" id="CLU_019326_0_0_1"/>
<dbReference type="InParanoid" id="Q6P8K8"/>
<dbReference type="OMA" id="DYQKDPA"/>
<dbReference type="OrthoDB" id="3626597at2759"/>
<dbReference type="PhylomeDB" id="Q6P8K8"/>
<dbReference type="TreeFam" id="TF317197"/>
<dbReference type="BioGRID-ORCS" id="71791">
    <property type="hits" value="1 hit in 79 CRISPR screens"/>
</dbReference>
<dbReference type="ChiTaRS" id="Cpa4">
    <property type="organism name" value="mouse"/>
</dbReference>
<dbReference type="PRO" id="PR:Q6P8K8"/>
<dbReference type="Proteomes" id="UP000000589">
    <property type="component" value="Chromosome 6"/>
</dbReference>
<dbReference type="RNAct" id="Q6P8K8">
    <property type="molecule type" value="protein"/>
</dbReference>
<dbReference type="Bgee" id="ENSMUSG00000039070">
    <property type="expression patterns" value="Expressed in lip and 31 other cell types or tissues"/>
</dbReference>
<dbReference type="GO" id="GO:0005615">
    <property type="term" value="C:extracellular space"/>
    <property type="evidence" value="ECO:0000250"/>
    <property type="project" value="UniProtKB"/>
</dbReference>
<dbReference type="GO" id="GO:0004181">
    <property type="term" value="F:metallocarboxypeptidase activity"/>
    <property type="evidence" value="ECO:0000250"/>
    <property type="project" value="UniProtKB"/>
</dbReference>
<dbReference type="GO" id="GO:0008270">
    <property type="term" value="F:zinc ion binding"/>
    <property type="evidence" value="ECO:0007669"/>
    <property type="project" value="InterPro"/>
</dbReference>
<dbReference type="GO" id="GO:0042447">
    <property type="term" value="P:hormone catabolic process"/>
    <property type="evidence" value="ECO:0000250"/>
    <property type="project" value="UniProtKB"/>
</dbReference>
<dbReference type="GO" id="GO:0043171">
    <property type="term" value="P:peptide catabolic process"/>
    <property type="evidence" value="ECO:0000250"/>
    <property type="project" value="UniProtKB"/>
</dbReference>
<dbReference type="GO" id="GO:0006508">
    <property type="term" value="P:proteolysis"/>
    <property type="evidence" value="ECO:0007669"/>
    <property type="project" value="UniProtKB-KW"/>
</dbReference>
<dbReference type="CDD" id="cd03870">
    <property type="entry name" value="M14_CPA"/>
    <property type="match status" value="1"/>
</dbReference>
<dbReference type="FunFam" id="3.40.630.10:FF:000132">
    <property type="entry name" value="Carboxypeptidase A1"/>
    <property type="match status" value="1"/>
</dbReference>
<dbReference type="FunFam" id="3.30.70.340:FF:000001">
    <property type="entry name" value="Carboxypeptidase A5"/>
    <property type="match status" value="1"/>
</dbReference>
<dbReference type="Gene3D" id="3.30.70.340">
    <property type="entry name" value="Metallocarboxypeptidase-like"/>
    <property type="match status" value="1"/>
</dbReference>
<dbReference type="Gene3D" id="3.40.630.10">
    <property type="entry name" value="Zn peptidases"/>
    <property type="match status" value="1"/>
</dbReference>
<dbReference type="InterPro" id="IPR034248">
    <property type="entry name" value="CPA_M14_CPD"/>
</dbReference>
<dbReference type="InterPro" id="IPR036990">
    <property type="entry name" value="M14A-like_propep"/>
</dbReference>
<dbReference type="InterPro" id="IPR003146">
    <property type="entry name" value="M14A_act_pep"/>
</dbReference>
<dbReference type="InterPro" id="IPR000834">
    <property type="entry name" value="Peptidase_M14"/>
</dbReference>
<dbReference type="PANTHER" id="PTHR11705:SF136">
    <property type="entry name" value="CARBOXYPEPTIDASE A4"/>
    <property type="match status" value="1"/>
</dbReference>
<dbReference type="PANTHER" id="PTHR11705">
    <property type="entry name" value="PROTEASE FAMILY M14 CARBOXYPEPTIDASE A,B"/>
    <property type="match status" value="1"/>
</dbReference>
<dbReference type="Pfam" id="PF00246">
    <property type="entry name" value="Peptidase_M14"/>
    <property type="match status" value="1"/>
</dbReference>
<dbReference type="Pfam" id="PF02244">
    <property type="entry name" value="Propep_M14"/>
    <property type="match status" value="1"/>
</dbReference>
<dbReference type="PRINTS" id="PR00765">
    <property type="entry name" value="CRBOXYPTASEA"/>
</dbReference>
<dbReference type="SMART" id="SM00631">
    <property type="entry name" value="Zn_pept"/>
    <property type="match status" value="1"/>
</dbReference>
<dbReference type="SUPFAM" id="SSF54897">
    <property type="entry name" value="Protease propeptides/inhibitors"/>
    <property type="match status" value="1"/>
</dbReference>
<dbReference type="SUPFAM" id="SSF53187">
    <property type="entry name" value="Zn-dependent exopeptidases"/>
    <property type="match status" value="1"/>
</dbReference>
<dbReference type="PROSITE" id="PS00132">
    <property type="entry name" value="CARBOXYPEPT_ZN_1"/>
    <property type="match status" value="1"/>
</dbReference>
<dbReference type="PROSITE" id="PS00133">
    <property type="entry name" value="CARBOXYPEPT_ZN_2"/>
    <property type="match status" value="1"/>
</dbReference>
<dbReference type="PROSITE" id="PS52035">
    <property type="entry name" value="PEPTIDASE_M14"/>
    <property type="match status" value="1"/>
</dbReference>
<organism>
    <name type="scientific">Mus musculus</name>
    <name type="common">Mouse</name>
    <dbReference type="NCBI Taxonomy" id="10090"/>
    <lineage>
        <taxon>Eukaryota</taxon>
        <taxon>Metazoa</taxon>
        <taxon>Chordata</taxon>
        <taxon>Craniata</taxon>
        <taxon>Vertebrata</taxon>
        <taxon>Euteleostomi</taxon>
        <taxon>Mammalia</taxon>
        <taxon>Eutheria</taxon>
        <taxon>Euarchontoglires</taxon>
        <taxon>Glires</taxon>
        <taxon>Rodentia</taxon>
        <taxon>Myomorpha</taxon>
        <taxon>Muroidea</taxon>
        <taxon>Muridae</taxon>
        <taxon>Murinae</taxon>
        <taxon>Mus</taxon>
        <taxon>Mus</taxon>
    </lineage>
</organism>
<keyword id="KW-0121">Carboxypeptidase</keyword>
<keyword id="KW-1015">Disulfide bond</keyword>
<keyword id="KW-0325">Glycoprotein</keyword>
<keyword id="KW-0378">Hydrolase</keyword>
<keyword id="KW-0479">Metal-binding</keyword>
<keyword id="KW-0482">Metalloprotease</keyword>
<keyword id="KW-0645">Protease</keyword>
<keyword id="KW-1185">Reference proteome</keyword>
<keyword id="KW-0964">Secreted</keyword>
<keyword id="KW-0732">Signal</keyword>
<keyword id="KW-0862">Zinc</keyword>
<proteinExistence type="evidence at transcript level"/>
<reference key="1">
    <citation type="journal article" date="2005" name="Science">
        <title>The transcriptional landscape of the mammalian genome.</title>
        <authorList>
            <person name="Carninci P."/>
            <person name="Kasukawa T."/>
            <person name="Katayama S."/>
            <person name="Gough J."/>
            <person name="Frith M.C."/>
            <person name="Maeda N."/>
            <person name="Oyama R."/>
            <person name="Ravasi T."/>
            <person name="Lenhard B."/>
            <person name="Wells C."/>
            <person name="Kodzius R."/>
            <person name="Shimokawa K."/>
            <person name="Bajic V.B."/>
            <person name="Brenner S.E."/>
            <person name="Batalov S."/>
            <person name="Forrest A.R."/>
            <person name="Zavolan M."/>
            <person name="Davis M.J."/>
            <person name="Wilming L.G."/>
            <person name="Aidinis V."/>
            <person name="Allen J.E."/>
            <person name="Ambesi-Impiombato A."/>
            <person name="Apweiler R."/>
            <person name="Aturaliya R.N."/>
            <person name="Bailey T.L."/>
            <person name="Bansal M."/>
            <person name="Baxter L."/>
            <person name="Beisel K.W."/>
            <person name="Bersano T."/>
            <person name="Bono H."/>
            <person name="Chalk A.M."/>
            <person name="Chiu K.P."/>
            <person name="Choudhary V."/>
            <person name="Christoffels A."/>
            <person name="Clutterbuck D.R."/>
            <person name="Crowe M.L."/>
            <person name="Dalla E."/>
            <person name="Dalrymple B.P."/>
            <person name="de Bono B."/>
            <person name="Della Gatta G."/>
            <person name="di Bernardo D."/>
            <person name="Down T."/>
            <person name="Engstrom P."/>
            <person name="Fagiolini M."/>
            <person name="Faulkner G."/>
            <person name="Fletcher C.F."/>
            <person name="Fukushima T."/>
            <person name="Furuno M."/>
            <person name="Futaki S."/>
            <person name="Gariboldi M."/>
            <person name="Georgii-Hemming P."/>
            <person name="Gingeras T.R."/>
            <person name="Gojobori T."/>
            <person name="Green R.E."/>
            <person name="Gustincich S."/>
            <person name="Harbers M."/>
            <person name="Hayashi Y."/>
            <person name="Hensch T.K."/>
            <person name="Hirokawa N."/>
            <person name="Hill D."/>
            <person name="Huminiecki L."/>
            <person name="Iacono M."/>
            <person name="Ikeo K."/>
            <person name="Iwama A."/>
            <person name="Ishikawa T."/>
            <person name="Jakt M."/>
            <person name="Kanapin A."/>
            <person name="Katoh M."/>
            <person name="Kawasawa Y."/>
            <person name="Kelso J."/>
            <person name="Kitamura H."/>
            <person name="Kitano H."/>
            <person name="Kollias G."/>
            <person name="Krishnan S.P."/>
            <person name="Kruger A."/>
            <person name="Kummerfeld S.K."/>
            <person name="Kurochkin I.V."/>
            <person name="Lareau L.F."/>
            <person name="Lazarevic D."/>
            <person name="Lipovich L."/>
            <person name="Liu J."/>
            <person name="Liuni S."/>
            <person name="McWilliam S."/>
            <person name="Madan Babu M."/>
            <person name="Madera M."/>
            <person name="Marchionni L."/>
            <person name="Matsuda H."/>
            <person name="Matsuzawa S."/>
            <person name="Miki H."/>
            <person name="Mignone F."/>
            <person name="Miyake S."/>
            <person name="Morris K."/>
            <person name="Mottagui-Tabar S."/>
            <person name="Mulder N."/>
            <person name="Nakano N."/>
            <person name="Nakauchi H."/>
            <person name="Ng P."/>
            <person name="Nilsson R."/>
            <person name="Nishiguchi S."/>
            <person name="Nishikawa S."/>
            <person name="Nori F."/>
            <person name="Ohara O."/>
            <person name="Okazaki Y."/>
            <person name="Orlando V."/>
            <person name="Pang K.C."/>
            <person name="Pavan W.J."/>
            <person name="Pavesi G."/>
            <person name="Pesole G."/>
            <person name="Petrovsky N."/>
            <person name="Piazza S."/>
            <person name="Reed J."/>
            <person name="Reid J.F."/>
            <person name="Ring B.Z."/>
            <person name="Ringwald M."/>
            <person name="Rost B."/>
            <person name="Ruan Y."/>
            <person name="Salzberg S.L."/>
            <person name="Sandelin A."/>
            <person name="Schneider C."/>
            <person name="Schoenbach C."/>
            <person name="Sekiguchi K."/>
            <person name="Semple C.A."/>
            <person name="Seno S."/>
            <person name="Sessa L."/>
            <person name="Sheng Y."/>
            <person name="Shibata Y."/>
            <person name="Shimada H."/>
            <person name="Shimada K."/>
            <person name="Silva D."/>
            <person name="Sinclair B."/>
            <person name="Sperling S."/>
            <person name="Stupka E."/>
            <person name="Sugiura K."/>
            <person name="Sultana R."/>
            <person name="Takenaka Y."/>
            <person name="Taki K."/>
            <person name="Tammoja K."/>
            <person name="Tan S.L."/>
            <person name="Tang S."/>
            <person name="Taylor M.S."/>
            <person name="Tegner J."/>
            <person name="Teichmann S.A."/>
            <person name="Ueda H.R."/>
            <person name="van Nimwegen E."/>
            <person name="Verardo R."/>
            <person name="Wei C.L."/>
            <person name="Yagi K."/>
            <person name="Yamanishi H."/>
            <person name="Zabarovsky E."/>
            <person name="Zhu S."/>
            <person name="Zimmer A."/>
            <person name="Hide W."/>
            <person name="Bult C."/>
            <person name="Grimmond S.M."/>
            <person name="Teasdale R.D."/>
            <person name="Liu E.T."/>
            <person name="Brusic V."/>
            <person name="Quackenbush J."/>
            <person name="Wahlestedt C."/>
            <person name="Mattick J.S."/>
            <person name="Hume D.A."/>
            <person name="Kai C."/>
            <person name="Sasaki D."/>
            <person name="Tomaru Y."/>
            <person name="Fukuda S."/>
            <person name="Kanamori-Katayama M."/>
            <person name="Suzuki M."/>
            <person name="Aoki J."/>
            <person name="Arakawa T."/>
            <person name="Iida J."/>
            <person name="Imamura K."/>
            <person name="Itoh M."/>
            <person name="Kato T."/>
            <person name="Kawaji H."/>
            <person name="Kawagashira N."/>
            <person name="Kawashima T."/>
            <person name="Kojima M."/>
            <person name="Kondo S."/>
            <person name="Konno H."/>
            <person name="Nakano K."/>
            <person name="Ninomiya N."/>
            <person name="Nishio T."/>
            <person name="Okada M."/>
            <person name="Plessy C."/>
            <person name="Shibata K."/>
            <person name="Shiraki T."/>
            <person name="Suzuki S."/>
            <person name="Tagami M."/>
            <person name="Waki K."/>
            <person name="Watahiki A."/>
            <person name="Okamura-Oho Y."/>
            <person name="Suzuki H."/>
            <person name="Kawai J."/>
            <person name="Hayashizaki Y."/>
        </authorList>
    </citation>
    <scope>NUCLEOTIDE SEQUENCE [LARGE SCALE MRNA]</scope>
    <source>
        <strain>C57BL/6J</strain>
        <tissue>Embryo</tissue>
        <tissue>Head</tissue>
    </source>
</reference>
<reference key="2">
    <citation type="journal article" date="2004" name="Genome Res.">
        <title>The status, quality, and expansion of the NIH full-length cDNA project: the Mammalian Gene Collection (MGC).</title>
        <authorList>
            <consortium name="The MGC Project Team"/>
        </authorList>
    </citation>
    <scope>NUCLEOTIDE SEQUENCE [LARGE SCALE MRNA]</scope>
    <source>
        <tissue>Pituitary</tissue>
    </source>
</reference>
<gene>
    <name type="primary">Cpa4</name>
</gene>
<comment type="function">
    <text evidence="4">Metalloprotease that cleaves hydrophobic C-terminal residues with a preference for -Phe, -Leu, -Ile, -Met, -Tyr and -Val (By similarity). May function in peptide hormone and/or neuropeptide catabolism (By similarity).</text>
</comment>
<comment type="cofactor">
    <cofactor evidence="2">
        <name>Zn(2+)</name>
        <dbReference type="ChEBI" id="CHEBI:29105"/>
    </cofactor>
    <text evidence="2">Binds 1 zinc ion per subunit.</text>
</comment>
<comment type="subunit">
    <text evidence="4">Interacts with LXN.</text>
</comment>
<comment type="subcellular location">
    <subcellularLocation>
        <location evidence="4">Secreted</location>
    </subcellularLocation>
</comment>
<comment type="similarity">
    <text evidence="7">Belongs to the peptidase M14 family.</text>
</comment>
<name>CBPA4_MOUSE</name>
<protein>
    <recommendedName>
        <fullName>Carboxypeptidase A4</fullName>
        <ecNumber>3.4.17.-</ecNumber>
    </recommendedName>
</protein>
<evidence type="ECO:0000250" key="1"/>
<evidence type="ECO:0000250" key="2">
    <source>
        <dbReference type="UniProtKB" id="P00730"/>
    </source>
</evidence>
<evidence type="ECO:0000250" key="3">
    <source>
        <dbReference type="UniProtKB" id="Q96IY4"/>
    </source>
</evidence>
<evidence type="ECO:0000250" key="4">
    <source>
        <dbReference type="UniProtKB" id="Q9UI42"/>
    </source>
</evidence>
<evidence type="ECO:0000255" key="5"/>
<evidence type="ECO:0000255" key="6">
    <source>
        <dbReference type="PROSITE-ProRule" id="PRU01379"/>
    </source>
</evidence>
<evidence type="ECO:0000305" key="7"/>